<organism>
    <name type="scientific">Staphylococcus aureus (strain N315)</name>
    <dbReference type="NCBI Taxonomy" id="158879"/>
    <lineage>
        <taxon>Bacteria</taxon>
        <taxon>Bacillati</taxon>
        <taxon>Bacillota</taxon>
        <taxon>Bacilli</taxon>
        <taxon>Bacillales</taxon>
        <taxon>Staphylococcaceae</taxon>
        <taxon>Staphylococcus</taxon>
    </lineage>
</organism>
<evidence type="ECO:0000250" key="1">
    <source>
        <dbReference type="UniProtKB" id="P25526"/>
    </source>
</evidence>
<evidence type="ECO:0000305" key="2"/>
<feature type="chain" id="PRO_0000293558" description="Putative aldehyde dehydrogenase">
    <location>
        <begin position="1"/>
        <end position="475"/>
    </location>
</feature>
<feature type="active site" description="Proton acceptor" evidence="1">
    <location>
        <position position="245"/>
    </location>
</feature>
<feature type="active site" description="Nucleophile" evidence="1">
    <location>
        <position position="279"/>
    </location>
</feature>
<feature type="binding site" evidence="1">
    <location>
        <begin position="146"/>
        <end position="147"/>
    </location>
    <ligand>
        <name>NAD(+)</name>
        <dbReference type="ChEBI" id="CHEBI:57540"/>
    </ligand>
</feature>
<feature type="binding site" evidence="1">
    <location>
        <begin position="223"/>
        <end position="224"/>
    </location>
    <ligand>
        <name>NAD(+)</name>
        <dbReference type="ChEBI" id="CHEBI:57540"/>
    </ligand>
</feature>
<feature type="binding site" evidence="1">
    <location>
        <position position="246"/>
    </location>
    <ligand>
        <name>NAD(+)</name>
        <dbReference type="ChEBI" id="CHEBI:57540"/>
    </ligand>
</feature>
<feature type="binding site" evidence="1">
    <location>
        <position position="379"/>
    </location>
    <ligand>
        <name>NAD(+)</name>
        <dbReference type="ChEBI" id="CHEBI:57540"/>
    </ligand>
</feature>
<sequence length="475" mass="51969">MRDYTKQYINGEWVESNSNETIEVINPATEEVIGKVAKGNKADVDKAVEAADDVYLEFRHTSVKERQALLDKIVKEYENRKDDIVQAITDELGAPLSLSERVHYQMGLNHFVAARDALDNYEFEERRGDDLVVKEAIGVSGLITPWNFPTNQTSLKLAAAFAAGSPVVLKPSEETPFAAVILAEIFDKVGVPKGVFNLVNGDGAGVGNPLSEHPKVRMMSFTGSGPTGSKIMEKAAKDFKKVSLELGGKSPYIVLDDVDIKEAAKATTGKVVNNTGQVCTAGTRVLVPNKIKDAFLAELKEQFSQVRVGNPREDGTQVGPIISKKQFDQVQNYINKGIEEGAELFYGGPGKPEGLEKGYFARPTIFINVDNQMTIAQEEIFGPVMSVITYNDLDEAIQIANDTKYGLAGYVIGKDKETLHKVARSIEAGTVEINEAGRKPDLPFGGYKQSGLGREWGDYGIEEFLEVKSIAGYFK</sequence>
<gene>
    <name type="ordered locus">SA1924</name>
</gene>
<comment type="catalytic activity">
    <reaction evidence="2">
        <text>an aldehyde + NAD(+) + H2O = a carboxylate + NADH + 2 H(+)</text>
        <dbReference type="Rhea" id="RHEA:16185"/>
        <dbReference type="ChEBI" id="CHEBI:15377"/>
        <dbReference type="ChEBI" id="CHEBI:15378"/>
        <dbReference type="ChEBI" id="CHEBI:17478"/>
        <dbReference type="ChEBI" id="CHEBI:29067"/>
        <dbReference type="ChEBI" id="CHEBI:57540"/>
        <dbReference type="ChEBI" id="CHEBI:57945"/>
        <dbReference type="EC" id="1.2.1.3"/>
    </reaction>
</comment>
<comment type="similarity">
    <text evidence="2">Belongs to the aldehyde dehydrogenase family.</text>
</comment>
<name>ALDH_STAAN</name>
<reference key="1">
    <citation type="journal article" date="2001" name="Lancet">
        <title>Whole genome sequencing of meticillin-resistant Staphylococcus aureus.</title>
        <authorList>
            <person name="Kuroda M."/>
            <person name="Ohta T."/>
            <person name="Uchiyama I."/>
            <person name="Baba T."/>
            <person name="Yuzawa H."/>
            <person name="Kobayashi I."/>
            <person name="Cui L."/>
            <person name="Oguchi A."/>
            <person name="Aoki K."/>
            <person name="Nagai Y."/>
            <person name="Lian J.-Q."/>
            <person name="Ito T."/>
            <person name="Kanamori M."/>
            <person name="Matsumaru H."/>
            <person name="Maruyama A."/>
            <person name="Murakami H."/>
            <person name="Hosoyama A."/>
            <person name="Mizutani-Ui Y."/>
            <person name="Takahashi N.K."/>
            <person name="Sawano T."/>
            <person name="Inoue R."/>
            <person name="Kaito C."/>
            <person name="Sekimizu K."/>
            <person name="Hirakawa H."/>
            <person name="Kuhara S."/>
            <person name="Goto S."/>
            <person name="Yabuzaki J."/>
            <person name="Kanehisa M."/>
            <person name="Yamashita A."/>
            <person name="Oshima K."/>
            <person name="Furuya K."/>
            <person name="Yoshino C."/>
            <person name="Shiba T."/>
            <person name="Hattori M."/>
            <person name="Ogasawara N."/>
            <person name="Hayashi H."/>
            <person name="Hiramatsu K."/>
        </authorList>
    </citation>
    <scope>NUCLEOTIDE SEQUENCE [LARGE SCALE GENOMIC DNA]</scope>
    <source>
        <strain>N315</strain>
    </source>
</reference>
<reference key="2">
    <citation type="journal article" date="2005" name="J. Microbiol. Methods">
        <title>Correlation of proteomic and transcriptomic profiles of Staphylococcus aureus during the post-exponential phase of growth.</title>
        <authorList>
            <person name="Scherl A."/>
            <person name="Francois P."/>
            <person name="Bento M."/>
            <person name="Deshusses J.M."/>
            <person name="Charbonnier Y."/>
            <person name="Converset V."/>
            <person name="Huyghe A."/>
            <person name="Walter N."/>
            <person name="Hoogland C."/>
            <person name="Appel R.D."/>
            <person name="Sanchez J.-C."/>
            <person name="Zimmermann-Ivol C.G."/>
            <person name="Corthals G.L."/>
            <person name="Hochstrasser D.F."/>
            <person name="Schrenzel J."/>
        </authorList>
    </citation>
    <scope>IDENTIFICATION BY MASS SPECTROMETRY</scope>
    <source>
        <strain>N315</strain>
    </source>
</reference>
<reference key="3">
    <citation type="submission" date="2007-10" db="UniProtKB">
        <title>Shotgun proteomic analysis of total and membrane protein extracts of S. aureus strain N315.</title>
        <authorList>
            <person name="Vaezzadeh A.R."/>
            <person name="Deshusses J."/>
            <person name="Lescuyer P."/>
            <person name="Hochstrasser D.F."/>
        </authorList>
    </citation>
    <scope>IDENTIFICATION BY MASS SPECTROMETRY [LARGE SCALE ANALYSIS]</scope>
    <source>
        <strain>N315</strain>
    </source>
</reference>
<proteinExistence type="evidence at protein level"/>
<keyword id="KW-0520">NAD</keyword>
<keyword id="KW-0560">Oxidoreductase</keyword>
<dbReference type="EC" id="1.2.1.3" evidence="2"/>
<dbReference type="EMBL" id="BA000018">
    <property type="protein sequence ID" value="BAB43208.1"/>
    <property type="molecule type" value="Genomic_DNA"/>
</dbReference>
<dbReference type="PIR" id="G90005">
    <property type="entry name" value="G90005"/>
</dbReference>
<dbReference type="RefSeq" id="WP_001206093.1">
    <property type="nucleotide sequence ID" value="NC_002745.2"/>
</dbReference>
<dbReference type="SMR" id="Q7A4D8"/>
<dbReference type="EnsemblBacteria" id="BAB43208">
    <property type="protein sequence ID" value="BAB43208"/>
    <property type="gene ID" value="BAB43208"/>
</dbReference>
<dbReference type="KEGG" id="sau:SA1924"/>
<dbReference type="HOGENOM" id="CLU_005391_0_2_9"/>
<dbReference type="GO" id="GO:0004029">
    <property type="term" value="F:aldehyde dehydrogenase (NAD+) activity"/>
    <property type="evidence" value="ECO:0007669"/>
    <property type="project" value="UniProtKB-EC"/>
</dbReference>
<dbReference type="GO" id="GO:0006081">
    <property type="term" value="P:aldehyde metabolic process"/>
    <property type="evidence" value="ECO:0007669"/>
    <property type="project" value="InterPro"/>
</dbReference>
<dbReference type="CDD" id="cd07138">
    <property type="entry name" value="ALDH_CddD_SSP0762"/>
    <property type="match status" value="1"/>
</dbReference>
<dbReference type="FunFam" id="3.40.605.10:FF:000026">
    <property type="entry name" value="Aldehyde dehydrogenase, putative"/>
    <property type="match status" value="1"/>
</dbReference>
<dbReference type="FunFam" id="3.40.309.10:FF:000012">
    <property type="entry name" value="Betaine aldehyde dehydrogenase"/>
    <property type="match status" value="1"/>
</dbReference>
<dbReference type="FunFam" id="3.40.605.10:FF:000007">
    <property type="entry name" value="NAD/NADP-dependent betaine aldehyde dehydrogenase"/>
    <property type="match status" value="1"/>
</dbReference>
<dbReference type="Gene3D" id="3.40.605.10">
    <property type="entry name" value="Aldehyde Dehydrogenase, Chain A, domain 1"/>
    <property type="match status" value="1"/>
</dbReference>
<dbReference type="Gene3D" id="3.40.309.10">
    <property type="entry name" value="Aldehyde Dehydrogenase, Chain A, domain 2"/>
    <property type="match status" value="1"/>
</dbReference>
<dbReference type="InterPro" id="IPR016161">
    <property type="entry name" value="Ald_DH/histidinol_DH"/>
</dbReference>
<dbReference type="InterPro" id="IPR016163">
    <property type="entry name" value="Ald_DH_C"/>
</dbReference>
<dbReference type="InterPro" id="IPR016160">
    <property type="entry name" value="Ald_DH_CS_CYS"/>
</dbReference>
<dbReference type="InterPro" id="IPR029510">
    <property type="entry name" value="Ald_DH_CS_GLU"/>
</dbReference>
<dbReference type="InterPro" id="IPR016162">
    <property type="entry name" value="Ald_DH_N"/>
</dbReference>
<dbReference type="InterPro" id="IPR015590">
    <property type="entry name" value="Aldehyde_DH_dom"/>
</dbReference>
<dbReference type="InterPro" id="IPR012394">
    <property type="entry name" value="Aldehyde_DH_NAD(P)"/>
</dbReference>
<dbReference type="PANTHER" id="PTHR42804">
    <property type="entry name" value="ALDEHYDE DEHYDROGENASE"/>
    <property type="match status" value="1"/>
</dbReference>
<dbReference type="PANTHER" id="PTHR42804:SF1">
    <property type="entry name" value="ALDEHYDE DEHYDROGENASE-RELATED"/>
    <property type="match status" value="1"/>
</dbReference>
<dbReference type="Pfam" id="PF00171">
    <property type="entry name" value="Aldedh"/>
    <property type="match status" value="1"/>
</dbReference>
<dbReference type="PIRSF" id="PIRSF036492">
    <property type="entry name" value="ALDH"/>
    <property type="match status" value="1"/>
</dbReference>
<dbReference type="SUPFAM" id="SSF53720">
    <property type="entry name" value="ALDH-like"/>
    <property type="match status" value="1"/>
</dbReference>
<dbReference type="PROSITE" id="PS00070">
    <property type="entry name" value="ALDEHYDE_DEHYDR_CYS"/>
    <property type="match status" value="1"/>
</dbReference>
<dbReference type="PROSITE" id="PS00687">
    <property type="entry name" value="ALDEHYDE_DEHYDR_GLU"/>
    <property type="match status" value="1"/>
</dbReference>
<protein>
    <recommendedName>
        <fullName evidence="2">Putative aldehyde dehydrogenase</fullName>
        <ecNumber evidence="2">1.2.1.3</ecNumber>
    </recommendedName>
</protein>
<accession>Q7A4D8</accession>